<evidence type="ECO:0000255" key="1">
    <source>
        <dbReference type="HAMAP-Rule" id="MF_01515"/>
    </source>
</evidence>
<organism>
    <name type="scientific">Bacillus mycoides (strain KBAB4)</name>
    <name type="common">Bacillus weihenstephanensis</name>
    <dbReference type="NCBI Taxonomy" id="315730"/>
    <lineage>
        <taxon>Bacteria</taxon>
        <taxon>Bacillati</taxon>
        <taxon>Bacillota</taxon>
        <taxon>Bacilli</taxon>
        <taxon>Bacillales</taxon>
        <taxon>Bacillaceae</taxon>
        <taxon>Bacillus</taxon>
        <taxon>Bacillus cereus group</taxon>
    </lineage>
</organism>
<accession>A9VM05</accession>
<protein>
    <recommendedName>
        <fullName evidence="1">UPF0316 protein BcerKBAB4_3093</fullName>
    </recommendedName>
</protein>
<reference key="1">
    <citation type="journal article" date="2008" name="Chem. Biol. Interact.">
        <title>Extending the Bacillus cereus group genomics to putative food-borne pathogens of different toxicity.</title>
        <authorList>
            <person name="Lapidus A."/>
            <person name="Goltsman E."/>
            <person name="Auger S."/>
            <person name="Galleron N."/>
            <person name="Segurens B."/>
            <person name="Dossat C."/>
            <person name="Land M.L."/>
            <person name="Broussolle V."/>
            <person name="Brillard J."/>
            <person name="Guinebretiere M.-H."/>
            <person name="Sanchis V."/>
            <person name="Nguen-the C."/>
            <person name="Lereclus D."/>
            <person name="Richardson P."/>
            <person name="Wincker P."/>
            <person name="Weissenbach J."/>
            <person name="Ehrlich S.D."/>
            <person name="Sorokin A."/>
        </authorList>
    </citation>
    <scope>NUCLEOTIDE SEQUENCE [LARGE SCALE GENOMIC DNA]</scope>
    <source>
        <strain>KBAB4</strain>
    </source>
</reference>
<gene>
    <name type="ordered locus">BcerKBAB4_3093</name>
</gene>
<name>Y3093_BACMK</name>
<sequence length="183" mass="20590">MLQALLIFVLQIIYVPTLTIRTILLVKNQTRSAAGVGLLEGAIYIVSLGIVFQDLSNWMNIVAYVIGFSAGLLLGGYIENKLAIGYITYQVSLLDRCNELVNELRHFGFGVTVFEGEGINSIRYRLDIVAKRSREKELLEIINEIAPKAFMSSYEIRSFKGGYLTKAMKKRALLKKKKDEHAL</sequence>
<keyword id="KW-1003">Cell membrane</keyword>
<keyword id="KW-0472">Membrane</keyword>
<keyword id="KW-0812">Transmembrane</keyword>
<keyword id="KW-1133">Transmembrane helix</keyword>
<comment type="subcellular location">
    <subcellularLocation>
        <location evidence="1">Cell membrane</location>
        <topology evidence="1">Multi-pass membrane protein</topology>
    </subcellularLocation>
</comment>
<comment type="similarity">
    <text evidence="1">Belongs to the UPF0316 family.</text>
</comment>
<proteinExistence type="inferred from homology"/>
<feature type="chain" id="PRO_1000198419" description="UPF0316 protein BcerKBAB4_3093">
    <location>
        <begin position="1"/>
        <end position="183"/>
    </location>
</feature>
<feature type="transmembrane region" description="Helical" evidence="1">
    <location>
        <begin position="6"/>
        <end position="26"/>
    </location>
</feature>
<feature type="transmembrane region" description="Helical" evidence="1">
    <location>
        <begin position="32"/>
        <end position="52"/>
    </location>
</feature>
<feature type="transmembrane region" description="Helical" evidence="1">
    <location>
        <begin position="58"/>
        <end position="78"/>
    </location>
</feature>
<dbReference type="EMBL" id="CP000903">
    <property type="protein sequence ID" value="ABY44271.1"/>
    <property type="molecule type" value="Genomic_DNA"/>
</dbReference>
<dbReference type="RefSeq" id="WP_002033341.1">
    <property type="nucleotide sequence ID" value="NC_010184.1"/>
</dbReference>
<dbReference type="SMR" id="A9VM05"/>
<dbReference type="KEGG" id="bwe:BcerKBAB4_3093"/>
<dbReference type="eggNOG" id="COG4843">
    <property type="taxonomic scope" value="Bacteria"/>
</dbReference>
<dbReference type="HOGENOM" id="CLU_106166_1_1_9"/>
<dbReference type="Proteomes" id="UP000002154">
    <property type="component" value="Chromosome"/>
</dbReference>
<dbReference type="GO" id="GO:0005886">
    <property type="term" value="C:plasma membrane"/>
    <property type="evidence" value="ECO:0007669"/>
    <property type="project" value="UniProtKB-SubCell"/>
</dbReference>
<dbReference type="CDD" id="cd16381">
    <property type="entry name" value="YitT_C_like_1"/>
    <property type="match status" value="1"/>
</dbReference>
<dbReference type="HAMAP" id="MF_01515">
    <property type="entry name" value="UPF0316"/>
    <property type="match status" value="1"/>
</dbReference>
<dbReference type="InterPro" id="IPR019264">
    <property type="entry name" value="DUF2179"/>
</dbReference>
<dbReference type="InterPro" id="IPR044035">
    <property type="entry name" value="DUF5698"/>
</dbReference>
<dbReference type="InterPro" id="IPR022930">
    <property type="entry name" value="UPF0316"/>
</dbReference>
<dbReference type="NCBIfam" id="NF003193">
    <property type="entry name" value="PRK04164.1-4"/>
    <property type="match status" value="1"/>
</dbReference>
<dbReference type="NCBIfam" id="NF003194">
    <property type="entry name" value="PRK04164.1-5"/>
    <property type="match status" value="1"/>
</dbReference>
<dbReference type="PANTHER" id="PTHR40060">
    <property type="entry name" value="UPF0316 PROTEIN YEBE"/>
    <property type="match status" value="1"/>
</dbReference>
<dbReference type="PANTHER" id="PTHR40060:SF1">
    <property type="entry name" value="UPF0316 PROTEIN YEBE"/>
    <property type="match status" value="1"/>
</dbReference>
<dbReference type="Pfam" id="PF10035">
    <property type="entry name" value="DUF2179"/>
    <property type="match status" value="1"/>
</dbReference>
<dbReference type="Pfam" id="PF18955">
    <property type="entry name" value="DUF5698"/>
    <property type="match status" value="1"/>
</dbReference>